<protein>
    <recommendedName>
        <fullName evidence="1">Phosphatidylserine decarboxylase proenzyme</fullName>
        <ecNumber evidence="1">4.1.1.65</ecNumber>
    </recommendedName>
    <component>
        <recommendedName>
            <fullName evidence="1">Phosphatidylserine decarboxylase alpha chain</fullName>
        </recommendedName>
    </component>
    <component>
        <recommendedName>
            <fullName evidence="1">Phosphatidylserine decarboxylase beta chain</fullName>
        </recommendedName>
    </component>
</protein>
<evidence type="ECO:0000255" key="1">
    <source>
        <dbReference type="HAMAP-Rule" id="MF_00662"/>
    </source>
</evidence>
<proteinExistence type="inferred from homology"/>
<dbReference type="EC" id="4.1.1.65" evidence="1"/>
<dbReference type="EMBL" id="CP000103">
    <property type="protein sequence ID" value="ABB73988.1"/>
    <property type="molecule type" value="Genomic_DNA"/>
</dbReference>
<dbReference type="RefSeq" id="WP_011380038.1">
    <property type="nucleotide sequence ID" value="NC_007614.1"/>
</dbReference>
<dbReference type="SMR" id="Q2YB83"/>
<dbReference type="STRING" id="323848.Nmul_A0681"/>
<dbReference type="KEGG" id="nmu:Nmul_A0681"/>
<dbReference type="eggNOG" id="COG0688">
    <property type="taxonomic scope" value="Bacteria"/>
</dbReference>
<dbReference type="HOGENOM" id="CLU_029061_4_1_4"/>
<dbReference type="OrthoDB" id="9802030at2"/>
<dbReference type="UniPathway" id="UPA00558">
    <property type="reaction ID" value="UER00616"/>
</dbReference>
<dbReference type="Proteomes" id="UP000002718">
    <property type="component" value="Chromosome"/>
</dbReference>
<dbReference type="GO" id="GO:0005886">
    <property type="term" value="C:plasma membrane"/>
    <property type="evidence" value="ECO:0007669"/>
    <property type="project" value="UniProtKB-SubCell"/>
</dbReference>
<dbReference type="GO" id="GO:0004609">
    <property type="term" value="F:phosphatidylserine decarboxylase activity"/>
    <property type="evidence" value="ECO:0007669"/>
    <property type="project" value="UniProtKB-UniRule"/>
</dbReference>
<dbReference type="GO" id="GO:0006646">
    <property type="term" value="P:phosphatidylethanolamine biosynthetic process"/>
    <property type="evidence" value="ECO:0007669"/>
    <property type="project" value="UniProtKB-UniRule"/>
</dbReference>
<dbReference type="HAMAP" id="MF_00662">
    <property type="entry name" value="PS_decarb_PSD_B_type1"/>
    <property type="match status" value="1"/>
</dbReference>
<dbReference type="InterPro" id="IPR003817">
    <property type="entry name" value="PS_Dcarbxylase"/>
</dbReference>
<dbReference type="InterPro" id="IPR033177">
    <property type="entry name" value="PSD-B"/>
</dbReference>
<dbReference type="InterPro" id="IPR033178">
    <property type="entry name" value="PSD_type1_pro"/>
</dbReference>
<dbReference type="NCBIfam" id="TIGR00163">
    <property type="entry name" value="PS_decarb"/>
    <property type="match status" value="1"/>
</dbReference>
<dbReference type="PANTHER" id="PTHR10067">
    <property type="entry name" value="PHOSPHATIDYLSERINE DECARBOXYLASE"/>
    <property type="match status" value="1"/>
</dbReference>
<dbReference type="PANTHER" id="PTHR10067:SF6">
    <property type="entry name" value="PHOSPHATIDYLSERINE DECARBOXYLASE PROENZYME, MITOCHONDRIAL"/>
    <property type="match status" value="1"/>
</dbReference>
<dbReference type="Pfam" id="PF02666">
    <property type="entry name" value="PS_Dcarbxylase"/>
    <property type="match status" value="1"/>
</dbReference>
<organism>
    <name type="scientific">Nitrosospira multiformis (strain ATCC 25196 / NCIMB 11849 / C 71)</name>
    <dbReference type="NCBI Taxonomy" id="323848"/>
    <lineage>
        <taxon>Bacteria</taxon>
        <taxon>Pseudomonadati</taxon>
        <taxon>Pseudomonadota</taxon>
        <taxon>Betaproteobacteria</taxon>
        <taxon>Nitrosomonadales</taxon>
        <taxon>Nitrosomonadaceae</taxon>
        <taxon>Nitrosospira</taxon>
    </lineage>
</organism>
<comment type="function">
    <text evidence="1">Catalyzes the formation of phosphatidylethanolamine (PtdEtn) from phosphatidylserine (PtdSer).</text>
</comment>
<comment type="catalytic activity">
    <reaction evidence="1">
        <text>a 1,2-diacyl-sn-glycero-3-phospho-L-serine + H(+) = a 1,2-diacyl-sn-glycero-3-phosphoethanolamine + CO2</text>
        <dbReference type="Rhea" id="RHEA:20828"/>
        <dbReference type="ChEBI" id="CHEBI:15378"/>
        <dbReference type="ChEBI" id="CHEBI:16526"/>
        <dbReference type="ChEBI" id="CHEBI:57262"/>
        <dbReference type="ChEBI" id="CHEBI:64612"/>
        <dbReference type="EC" id="4.1.1.65"/>
    </reaction>
</comment>
<comment type="cofactor">
    <cofactor evidence="1">
        <name>pyruvate</name>
        <dbReference type="ChEBI" id="CHEBI:15361"/>
    </cofactor>
    <text evidence="1">Binds 1 pyruvoyl group covalently per subunit.</text>
</comment>
<comment type="pathway">
    <text evidence="1">Phospholipid metabolism; phosphatidylethanolamine biosynthesis; phosphatidylethanolamine from CDP-diacylglycerol: step 2/2.</text>
</comment>
<comment type="subunit">
    <text evidence="1">Heterodimer of a large membrane-associated beta subunit and a small pyruvoyl-containing alpha subunit.</text>
</comment>
<comment type="subcellular location">
    <subcellularLocation>
        <location evidence="1">Cell membrane</location>
        <topology evidence="1">Peripheral membrane protein</topology>
    </subcellularLocation>
</comment>
<comment type="PTM">
    <text evidence="1">Is synthesized initially as an inactive proenzyme. Formation of the active enzyme involves a self-maturation process in which the active site pyruvoyl group is generated from an internal serine residue via an autocatalytic post-translational modification. Two non-identical subunits are generated from the proenzyme in this reaction, and the pyruvate is formed at the N-terminus of the alpha chain, which is derived from the carboxyl end of the proenzyme. The autoendoproteolytic cleavage occurs by a canonical serine protease mechanism, in which the side chain hydroxyl group of the serine supplies its oxygen atom to form the C-terminus of the beta chain, while the remainder of the serine residue undergoes an oxidative deamination to produce ammonia and the pyruvoyl prosthetic group on the alpha chain. During this reaction, the Ser that is part of the protease active site of the proenzyme becomes the pyruvoyl prosthetic group, which constitutes an essential element of the active site of the mature decarboxylase.</text>
</comment>
<comment type="similarity">
    <text evidence="1">Belongs to the phosphatidylserine decarboxylase family. PSD-B subfamily. Prokaryotic type I sub-subfamily.</text>
</comment>
<gene>
    <name evidence="1" type="primary">psd</name>
    <name type="ordered locus">Nmul_A0681</name>
</gene>
<name>PSD_NITMU</name>
<accession>Q2YB83</accession>
<feature type="chain" id="PRO_0000262129" description="Phosphatidylserine decarboxylase beta chain" evidence="1">
    <location>
        <begin position="1"/>
        <end position="251"/>
    </location>
</feature>
<feature type="chain" id="PRO_0000262130" description="Phosphatidylserine decarboxylase alpha chain" evidence="1">
    <location>
        <begin position="252"/>
        <end position="289"/>
    </location>
</feature>
<feature type="active site" description="Charge relay system; for autoendoproteolytic cleavage activity" evidence="1">
    <location>
        <position position="89"/>
    </location>
</feature>
<feature type="active site" description="Charge relay system; for autoendoproteolytic cleavage activity" evidence="1">
    <location>
        <position position="146"/>
    </location>
</feature>
<feature type="active site" description="Charge relay system; for autoendoproteolytic cleavage activity" evidence="1">
    <location>
        <position position="252"/>
    </location>
</feature>
<feature type="active site" description="Schiff-base intermediate with substrate; via pyruvic acid; for decarboxylase activity" evidence="1">
    <location>
        <position position="252"/>
    </location>
</feature>
<feature type="site" description="Cleavage (non-hydrolytic); by autocatalysis" evidence="1">
    <location>
        <begin position="251"/>
        <end position="252"/>
    </location>
</feature>
<feature type="modified residue" description="Pyruvic acid (Ser); by autocatalysis" evidence="1">
    <location>
        <position position="252"/>
    </location>
</feature>
<sequence length="289" mass="32038">MQTASLSVFPQYLLPKHALTLLAGRIANAEAGNLTTLLIRWFVWRYGVNMNEAINPDIRSYRTFNEFFTRPLLLENRPISDADYVCPADGVISQLGVISGDQIFQAKGHNYSAAALLGGDTRLAEKFYGGNFATLYLSPRDYHRVHMPVDARVSRMIYVPGDLFSVNAKTVRGVPGLFARNERVICIFESEFGPFALVLVGATIVGSVATVWHGVVNPRDSEGARDVQEWRYDSADLVLKKGDEMGRFQLGSTVVMLFPKNEIAFNPAWAPGRTIRFGETMATKADPAK</sequence>
<keyword id="KW-1003">Cell membrane</keyword>
<keyword id="KW-0210">Decarboxylase</keyword>
<keyword id="KW-0444">Lipid biosynthesis</keyword>
<keyword id="KW-0443">Lipid metabolism</keyword>
<keyword id="KW-0456">Lyase</keyword>
<keyword id="KW-0472">Membrane</keyword>
<keyword id="KW-0594">Phospholipid biosynthesis</keyword>
<keyword id="KW-1208">Phospholipid metabolism</keyword>
<keyword id="KW-0670">Pyruvate</keyword>
<keyword id="KW-1185">Reference proteome</keyword>
<keyword id="KW-0865">Zymogen</keyword>
<reference key="1">
    <citation type="submission" date="2005-08" db="EMBL/GenBank/DDBJ databases">
        <title>Complete sequence of chromosome 1 of Nitrosospira multiformis ATCC 25196.</title>
        <authorList>
            <person name="Copeland A."/>
            <person name="Lucas S."/>
            <person name="Lapidus A."/>
            <person name="Barry K."/>
            <person name="Detter J.C."/>
            <person name="Glavina T."/>
            <person name="Hammon N."/>
            <person name="Israni S."/>
            <person name="Pitluck S."/>
            <person name="Chain P."/>
            <person name="Malfatti S."/>
            <person name="Shin M."/>
            <person name="Vergez L."/>
            <person name="Schmutz J."/>
            <person name="Larimer F."/>
            <person name="Land M."/>
            <person name="Hauser L."/>
            <person name="Kyrpides N."/>
            <person name="Lykidis A."/>
            <person name="Richardson P."/>
        </authorList>
    </citation>
    <scope>NUCLEOTIDE SEQUENCE [LARGE SCALE GENOMIC DNA]</scope>
    <source>
        <strain>ATCC 25196 / NCIMB 11849 / C 71</strain>
    </source>
</reference>